<protein>
    <recommendedName>
        <fullName>Dihydroorotate dehydrogenase B (NAD(+)), catalytic subunit</fullName>
        <shortName>DHOD B</shortName>
        <shortName>DHODase B</shortName>
        <shortName>DHOdehase B</shortName>
        <ecNumber>1.3.1.14</ecNumber>
    </recommendedName>
    <alternativeName>
        <fullName>Dihydroorotate oxidase B</fullName>
    </alternativeName>
    <alternativeName>
        <fullName>Orotate reductase (NADH)</fullName>
    </alternativeName>
</protein>
<comment type="function">
    <text evidence="1">Catalyzes the conversion of dihydroorotate to orotate with NAD(+) as electron acceptor.</text>
</comment>
<comment type="catalytic activity">
    <reaction>
        <text>(S)-dihydroorotate + NAD(+) = orotate + NADH + H(+)</text>
        <dbReference type="Rhea" id="RHEA:13513"/>
        <dbReference type="ChEBI" id="CHEBI:15378"/>
        <dbReference type="ChEBI" id="CHEBI:30839"/>
        <dbReference type="ChEBI" id="CHEBI:30864"/>
        <dbReference type="ChEBI" id="CHEBI:57540"/>
        <dbReference type="ChEBI" id="CHEBI:57945"/>
        <dbReference type="EC" id="1.3.1.14"/>
    </reaction>
</comment>
<comment type="cofactor">
    <cofactor evidence="1">
        <name>FMN</name>
        <dbReference type="ChEBI" id="CHEBI:58210"/>
    </cofactor>
    <text evidence="1">Binds 1 FMN per subunit.</text>
</comment>
<comment type="pathway">
    <text>Pyrimidine metabolism; UMP biosynthesis via de novo pathway; orotate from (S)-dihydroorotate (NAD(+) route): step 1/1.</text>
</comment>
<comment type="subunit">
    <text evidence="1">Heterotetramer of 2 PyrK and 2 PyrD type B subunits.</text>
</comment>
<comment type="subcellular location">
    <subcellularLocation>
        <location evidence="1">Cytoplasm</location>
    </subcellularLocation>
</comment>
<comment type="similarity">
    <text evidence="2">Belongs to the dihydroorotate dehydrogenase family. Type 1 subfamily.</text>
</comment>
<reference key="1">
    <citation type="submission" date="2008-10" db="EMBL/GenBank/DDBJ databases">
        <title>Genome sequence of Bacillus cereus G9842.</title>
        <authorList>
            <person name="Dodson R.J."/>
            <person name="Durkin A.S."/>
            <person name="Rosovitz M.J."/>
            <person name="Rasko D.A."/>
            <person name="Hoffmaster A."/>
            <person name="Ravel J."/>
            <person name="Sutton G."/>
        </authorList>
    </citation>
    <scope>NUCLEOTIDE SEQUENCE [LARGE SCALE GENOMIC DNA]</scope>
    <source>
        <strain>G9842</strain>
    </source>
</reference>
<dbReference type="EC" id="1.3.1.14"/>
<dbReference type="EMBL" id="CP001186">
    <property type="protein sequence ID" value="ACK93607.1"/>
    <property type="molecule type" value="Genomic_DNA"/>
</dbReference>
<dbReference type="RefSeq" id="WP_001081049.1">
    <property type="nucleotide sequence ID" value="NC_011772.1"/>
</dbReference>
<dbReference type="SMR" id="B7IUP4"/>
<dbReference type="KEGG" id="bcg:BCG9842_B1259"/>
<dbReference type="HOGENOM" id="CLU_042042_0_0_9"/>
<dbReference type="UniPathway" id="UPA00070">
    <property type="reaction ID" value="UER00945"/>
</dbReference>
<dbReference type="Proteomes" id="UP000006744">
    <property type="component" value="Chromosome"/>
</dbReference>
<dbReference type="GO" id="GO:0005737">
    <property type="term" value="C:cytoplasm"/>
    <property type="evidence" value="ECO:0007669"/>
    <property type="project" value="UniProtKB-SubCell"/>
</dbReference>
<dbReference type="GO" id="GO:0004589">
    <property type="term" value="F:dihydroorotate dehydrogenase (NAD+) activity"/>
    <property type="evidence" value="ECO:0007669"/>
    <property type="project" value="UniProtKB-EC"/>
</dbReference>
<dbReference type="GO" id="GO:0006207">
    <property type="term" value="P:'de novo' pyrimidine nucleobase biosynthetic process"/>
    <property type="evidence" value="ECO:0007669"/>
    <property type="project" value="InterPro"/>
</dbReference>
<dbReference type="GO" id="GO:0044205">
    <property type="term" value="P:'de novo' UMP biosynthetic process"/>
    <property type="evidence" value="ECO:0007669"/>
    <property type="project" value="UniProtKB-UniRule"/>
</dbReference>
<dbReference type="CDD" id="cd04740">
    <property type="entry name" value="DHOD_1B_like"/>
    <property type="match status" value="1"/>
</dbReference>
<dbReference type="FunFam" id="3.20.20.70:FF:000069">
    <property type="entry name" value="Dihydroorotate dehydrogenase"/>
    <property type="match status" value="1"/>
</dbReference>
<dbReference type="Gene3D" id="3.20.20.70">
    <property type="entry name" value="Aldolase class I"/>
    <property type="match status" value="1"/>
</dbReference>
<dbReference type="HAMAP" id="MF_00224">
    <property type="entry name" value="DHO_dh_type1"/>
    <property type="match status" value="1"/>
</dbReference>
<dbReference type="InterPro" id="IPR013785">
    <property type="entry name" value="Aldolase_TIM"/>
</dbReference>
<dbReference type="InterPro" id="IPR050074">
    <property type="entry name" value="DHO_dehydrogenase"/>
</dbReference>
<dbReference type="InterPro" id="IPR033888">
    <property type="entry name" value="DHOD_1B"/>
</dbReference>
<dbReference type="InterPro" id="IPR024920">
    <property type="entry name" value="Dihydroorotate_DH_1"/>
</dbReference>
<dbReference type="InterPro" id="IPR012135">
    <property type="entry name" value="Dihydroorotate_DH_1_2"/>
</dbReference>
<dbReference type="InterPro" id="IPR005720">
    <property type="entry name" value="Dihydroorotate_DH_cat"/>
</dbReference>
<dbReference type="InterPro" id="IPR001295">
    <property type="entry name" value="Dihydroorotate_DH_CS"/>
</dbReference>
<dbReference type="InterPro" id="IPR049622">
    <property type="entry name" value="Dihydroorotate_DH_I"/>
</dbReference>
<dbReference type="NCBIfam" id="NF005574">
    <property type="entry name" value="PRK07259.1"/>
    <property type="match status" value="1"/>
</dbReference>
<dbReference type="NCBIfam" id="TIGR01037">
    <property type="entry name" value="pyrD_sub1_fam"/>
    <property type="match status" value="1"/>
</dbReference>
<dbReference type="PANTHER" id="PTHR48109:SF1">
    <property type="entry name" value="DIHYDROOROTATE DEHYDROGENASE (FUMARATE)"/>
    <property type="match status" value="1"/>
</dbReference>
<dbReference type="PANTHER" id="PTHR48109">
    <property type="entry name" value="DIHYDROOROTATE DEHYDROGENASE (QUINONE), MITOCHONDRIAL-RELATED"/>
    <property type="match status" value="1"/>
</dbReference>
<dbReference type="Pfam" id="PF01180">
    <property type="entry name" value="DHO_dh"/>
    <property type="match status" value="1"/>
</dbReference>
<dbReference type="PIRSF" id="PIRSF000164">
    <property type="entry name" value="DHO_oxidase"/>
    <property type="match status" value="1"/>
</dbReference>
<dbReference type="SUPFAM" id="SSF51395">
    <property type="entry name" value="FMN-linked oxidoreductases"/>
    <property type="match status" value="1"/>
</dbReference>
<dbReference type="PROSITE" id="PS00911">
    <property type="entry name" value="DHODEHASE_1"/>
    <property type="match status" value="1"/>
</dbReference>
<dbReference type="PROSITE" id="PS00912">
    <property type="entry name" value="DHODEHASE_2"/>
    <property type="match status" value="1"/>
</dbReference>
<organism>
    <name type="scientific">Bacillus cereus (strain G9842)</name>
    <dbReference type="NCBI Taxonomy" id="405531"/>
    <lineage>
        <taxon>Bacteria</taxon>
        <taxon>Bacillati</taxon>
        <taxon>Bacillota</taxon>
        <taxon>Bacilli</taxon>
        <taxon>Bacillales</taxon>
        <taxon>Bacillaceae</taxon>
        <taxon>Bacillus</taxon>
        <taxon>Bacillus cereus group</taxon>
    </lineage>
</organism>
<name>PYRDB_BACC2</name>
<gene>
    <name type="primary">pyrD</name>
    <name type="ordered locus">BCG9842_B1259</name>
</gene>
<feature type="chain" id="PRO_1000195045" description="Dihydroorotate dehydrogenase B (NAD(+)), catalytic subunit">
    <location>
        <begin position="1"/>
        <end position="309"/>
    </location>
</feature>
<feature type="active site" description="Nucleophile">
    <location>
        <position position="130"/>
    </location>
</feature>
<feature type="binding site" evidence="1">
    <location>
        <position position="21"/>
    </location>
    <ligand>
        <name>FMN</name>
        <dbReference type="ChEBI" id="CHEBI:58210"/>
    </ligand>
</feature>
<feature type="binding site" evidence="1">
    <location>
        <begin position="45"/>
        <end position="46"/>
    </location>
    <ligand>
        <name>FMN</name>
        <dbReference type="ChEBI" id="CHEBI:58210"/>
    </ligand>
</feature>
<feature type="binding site" evidence="1">
    <location>
        <position position="45"/>
    </location>
    <ligand>
        <name>substrate</name>
    </ligand>
</feature>
<feature type="binding site" evidence="1">
    <location>
        <begin position="69"/>
        <end position="73"/>
    </location>
    <ligand>
        <name>substrate</name>
    </ligand>
</feature>
<feature type="binding site" evidence="1">
    <location>
        <position position="99"/>
    </location>
    <ligand>
        <name>FMN</name>
        <dbReference type="ChEBI" id="CHEBI:58210"/>
    </ligand>
</feature>
<feature type="binding site" evidence="1">
    <location>
        <position position="127"/>
    </location>
    <ligand>
        <name>FMN</name>
        <dbReference type="ChEBI" id="CHEBI:58210"/>
    </ligand>
</feature>
<feature type="binding site" evidence="1">
    <location>
        <position position="127"/>
    </location>
    <ligand>
        <name>substrate</name>
    </ligand>
</feature>
<feature type="binding site" evidence="1">
    <location>
        <position position="165"/>
    </location>
    <ligand>
        <name>FMN</name>
        <dbReference type="ChEBI" id="CHEBI:58210"/>
    </ligand>
</feature>
<feature type="binding site" evidence="1">
    <location>
        <position position="191"/>
    </location>
    <ligand>
        <name>FMN</name>
        <dbReference type="ChEBI" id="CHEBI:58210"/>
    </ligand>
</feature>
<feature type="binding site" evidence="1">
    <location>
        <begin position="192"/>
        <end position="193"/>
    </location>
    <ligand>
        <name>substrate</name>
    </ligand>
</feature>
<feature type="binding site" evidence="1">
    <location>
        <position position="217"/>
    </location>
    <ligand>
        <name>FMN</name>
        <dbReference type="ChEBI" id="CHEBI:58210"/>
    </ligand>
</feature>
<feature type="binding site" evidence="1">
    <location>
        <begin position="243"/>
        <end position="244"/>
    </location>
    <ligand>
        <name>FMN</name>
        <dbReference type="ChEBI" id="CHEBI:58210"/>
    </ligand>
</feature>
<feature type="binding site" evidence="1">
    <location>
        <begin position="265"/>
        <end position="266"/>
    </location>
    <ligand>
        <name>FMN</name>
        <dbReference type="ChEBI" id="CHEBI:58210"/>
    </ligand>
</feature>
<keyword id="KW-0963">Cytoplasm</keyword>
<keyword id="KW-0285">Flavoprotein</keyword>
<keyword id="KW-0288">FMN</keyword>
<keyword id="KW-0520">NAD</keyword>
<keyword id="KW-0560">Oxidoreductase</keyword>
<keyword id="KW-0665">Pyrimidine biosynthesis</keyword>
<proteinExistence type="inferred from homology"/>
<accession>B7IUP4</accession>
<sequence>MNRLQVELPGLSLKNPIIPASGCFGFGREYAQFYDLSVLGSIMIKATTEQPRYGNPTPRVAETPGGMLNAIGLQNPGLDKVMNSELPWLEQFDLPIIANVAGSQAEDYVAVAKEISKAPNVHALELNISCPNVKTGGIAFGTNPEIAADLTKRVKEVSEVPVYVKLSPNVANIVEIAKAIENAGADGLTMINTLLGMRLDLKTAKPILANRTGGLSGPAIKPVAIRMVHEVSQAVNIPIIGMGGIETAEDVIEFFYAGASAVAVGTANFIDPFVCPTIIEELPALLDELGFDHISECQGRSWKQTCHSR</sequence>
<evidence type="ECO:0000250" key="1"/>
<evidence type="ECO:0000305" key="2"/>